<dbReference type="EMBL" id="AB164303">
    <property type="protein sequence ID" value="BAD12422.1"/>
    <property type="molecule type" value="mRNA"/>
</dbReference>
<dbReference type="EMBL" id="AB473834">
    <property type="protein sequence ID" value="BAH10545.1"/>
    <property type="molecule type" value="mRNA"/>
</dbReference>
<dbReference type="EMBL" id="AB010700">
    <property type="protein sequence ID" value="BAB08629.1"/>
    <property type="molecule type" value="Genomic_DNA"/>
</dbReference>
<dbReference type="EMBL" id="CP002688">
    <property type="protein sequence ID" value="AED98273.1"/>
    <property type="molecule type" value="Genomic_DNA"/>
</dbReference>
<dbReference type="EMBL" id="AK228533">
    <property type="protein sequence ID" value="BAF00455.1"/>
    <property type="molecule type" value="mRNA"/>
</dbReference>
<dbReference type="EMBL" id="BT044058">
    <property type="protein sequence ID" value="ACH90465.1"/>
    <property type="molecule type" value="mRNA"/>
</dbReference>
<dbReference type="RefSeq" id="NP_201488.1">
    <property type="nucleotide sequence ID" value="NM_126086.7"/>
</dbReference>
<dbReference type="SMR" id="Q9FKZ3"/>
<dbReference type="FunCoup" id="Q9FKZ3">
    <property type="interactions" value="2"/>
</dbReference>
<dbReference type="IntAct" id="Q9FKZ3">
    <property type="interactions" value="1"/>
</dbReference>
<dbReference type="STRING" id="3702.Q9FKZ3"/>
<dbReference type="iPTMnet" id="Q9FKZ3"/>
<dbReference type="PaxDb" id="3702-AT5G66870.1"/>
<dbReference type="ProteomicsDB" id="238409"/>
<dbReference type="EnsemblPlants" id="AT5G66870.1">
    <property type="protein sequence ID" value="AT5G66870.1"/>
    <property type="gene ID" value="AT5G66870"/>
</dbReference>
<dbReference type="GeneID" id="836821"/>
<dbReference type="Gramene" id="AT5G66870.1">
    <property type="protein sequence ID" value="AT5G66870.1"/>
    <property type="gene ID" value="AT5G66870"/>
</dbReference>
<dbReference type="KEGG" id="ath:AT5G66870"/>
<dbReference type="Araport" id="AT5G66870"/>
<dbReference type="TAIR" id="AT5G66870">
    <property type="gene designation" value="ASL1"/>
</dbReference>
<dbReference type="eggNOG" id="ENOG502QSSJ">
    <property type="taxonomic scope" value="Eukaryota"/>
</dbReference>
<dbReference type="HOGENOM" id="CLU_058353_1_0_1"/>
<dbReference type="InParanoid" id="Q9FKZ3"/>
<dbReference type="OMA" id="QQFFEPQ"/>
<dbReference type="PhylomeDB" id="Q9FKZ3"/>
<dbReference type="PRO" id="PR:Q9FKZ3"/>
<dbReference type="Proteomes" id="UP000006548">
    <property type="component" value="Chromosome 5"/>
</dbReference>
<dbReference type="ExpressionAtlas" id="Q9FKZ3">
    <property type="expression patterns" value="baseline and differential"/>
</dbReference>
<dbReference type="GO" id="GO:0009965">
    <property type="term" value="P:leaf morphogenesis"/>
    <property type="evidence" value="ECO:0000315"/>
    <property type="project" value="TAIR"/>
</dbReference>
<dbReference type="GO" id="GO:0048441">
    <property type="term" value="P:petal development"/>
    <property type="evidence" value="ECO:0000316"/>
    <property type="project" value="TAIR"/>
</dbReference>
<dbReference type="GO" id="GO:0009954">
    <property type="term" value="P:proximal/distal pattern formation"/>
    <property type="evidence" value="ECO:0000316"/>
    <property type="project" value="TAIR"/>
</dbReference>
<dbReference type="GO" id="GO:0006355">
    <property type="term" value="P:regulation of DNA-templated transcription"/>
    <property type="evidence" value="ECO:0000315"/>
    <property type="project" value="TAIR"/>
</dbReference>
<dbReference type="InterPro" id="IPR004883">
    <property type="entry name" value="LOB"/>
</dbReference>
<dbReference type="InterPro" id="IPR017414">
    <property type="entry name" value="LOBD"/>
</dbReference>
<dbReference type="PANTHER" id="PTHR31301:SF68">
    <property type="entry name" value="LOB DOMAIN-CONTAINING PROTEIN 32-RELATED"/>
    <property type="match status" value="1"/>
</dbReference>
<dbReference type="PANTHER" id="PTHR31301">
    <property type="entry name" value="LOB DOMAIN-CONTAINING PROTEIN 4-RELATED"/>
    <property type="match status" value="1"/>
</dbReference>
<dbReference type="Pfam" id="PF03195">
    <property type="entry name" value="LOB"/>
    <property type="match status" value="1"/>
</dbReference>
<dbReference type="PIRSF" id="PIRSF038155">
    <property type="entry name" value="Protein_ASYMMETRIC_LEAVES"/>
    <property type="match status" value="1"/>
</dbReference>
<dbReference type="PROSITE" id="PS50891">
    <property type="entry name" value="LOB"/>
    <property type="match status" value="1"/>
</dbReference>
<sequence length="313" mass="34523">MASSSSPCAACKFLRRKCTQECVFAPYFPPDQPQKFAFVHKVFGASNVAKLLNELASNQREDAVNSLFYEAEARLRDPVYGCVGLISILQHRLKQVNHDLENAKKELATYVGPQAMLPILQPHFMSLPPQPQRPSSSSASVLTQHHHNLLPMMAIPTGQLYHQQQQQIFEAQQLAAVAREQQNEMFRAYGGGGGSSSPHHQNQAQAEILRFNNGFDSVPAGSVTVTGFNQLSSGGTAVTGMSLGGNFVDSPSTNNNYHTDQQLHHHHQPQQHHEAQLFIPSQSSQPLPLQTQETQTQTQPNSESEEGRRNVIG</sequence>
<proteinExistence type="evidence at transcript level"/>
<gene>
    <name type="primary">LBD36</name>
    <name type="synonym">ASL1</name>
    <name type="ordered locus">At5g66870</name>
    <name type="ORF">MUD21.13</name>
</gene>
<comment type="function">
    <text evidence="4 5">Controls the proximal-distal patterning in petals and the adaxial-abaxial determination of leaves. Involved in the repression of the homeobox gene BP.</text>
</comment>
<comment type="tissue specificity">
    <text evidence="5">Expressed in trichomes, at the base of many lateral organs, including branching points of the inflorescence and floral organs and in the distal part of the pistil at stages when style and stigma start to develop. Also detected in pedicels and at the base of petals and sepals.</text>
</comment>
<comment type="disruption phenotype">
    <text evidence="3">No visible phenotype; due to the partial redundancy with AS2. Gain-of-function mutants iso-3D, iso-4D and dsl1-D (T-DNA and transposon tagging) show flowers and siliques bended downwards.</text>
</comment>
<comment type="similarity">
    <text evidence="6">Belongs to the LOB domain-containing protein family.</text>
</comment>
<name>LBD36_ARATH</name>
<keyword id="KW-0217">Developmental protein</keyword>
<keyword id="KW-1185">Reference proteome</keyword>
<reference key="1">
    <citation type="journal article" date="2002" name="Plant Cell Physiol.">
        <title>The ASYMMETRIC LEAVES2 gene of Arabidopsis thaliana, required for formation of a symmetric flat leaf lamina, encodes a member of a novel family of proteins characterized by cysteine repeats and a leucine zipper.</title>
        <authorList>
            <person name="Iwakawa H."/>
            <person name="Ueno Y."/>
            <person name="Semiarti E."/>
            <person name="Onouchi H."/>
            <person name="Kojima S."/>
            <person name="Tsukaya H."/>
            <person name="Hasebe M."/>
            <person name="Soma T."/>
            <person name="Ikezaki M."/>
            <person name="Machida C."/>
            <person name="Machida Y."/>
        </authorList>
    </citation>
    <scope>NUCLEOTIDE SEQUENCE [MRNA]</scope>
    <scope>GENE FAMILY</scope>
    <scope>NOMENCLATURE</scope>
    <scope>DISRUPTION PHENOTYPE</scope>
</reference>
<reference key="2">
    <citation type="journal article" date="2009" name="Plant J.">
        <title>Characterization of genes in the ASYMMETRIC LEAVES2/LATERAL ORGAN BOUNDARIES (AS2/LOB) family in Arabidopsis thaliana, and functional and molecular comparisons between AS2 and other family members.</title>
        <authorList>
            <person name="Matsumura Y."/>
            <person name="Iwakawa H."/>
            <person name="Machida Y."/>
            <person name="Machida C."/>
        </authorList>
    </citation>
    <scope>NUCLEOTIDE SEQUENCE [MRNA]</scope>
    <source>
        <strain>cv. Columbia</strain>
    </source>
</reference>
<reference key="3">
    <citation type="journal article" date="1998" name="DNA Res.">
        <title>Structural analysis of Arabidopsis thaliana chromosome 5. V. Sequence features of the regions of 1,381,565 bp covered by twenty one physically assigned P1 and TAC clones.</title>
        <authorList>
            <person name="Kaneko T."/>
            <person name="Kotani H."/>
            <person name="Nakamura Y."/>
            <person name="Sato S."/>
            <person name="Asamizu E."/>
            <person name="Miyajima N."/>
            <person name="Tabata S."/>
        </authorList>
    </citation>
    <scope>NUCLEOTIDE SEQUENCE [LARGE SCALE GENOMIC DNA]</scope>
    <source>
        <strain>cv. Columbia</strain>
    </source>
</reference>
<reference key="4">
    <citation type="journal article" date="2017" name="Plant J.">
        <title>Araport11: a complete reannotation of the Arabidopsis thaliana reference genome.</title>
        <authorList>
            <person name="Cheng C.Y."/>
            <person name="Krishnakumar V."/>
            <person name="Chan A.P."/>
            <person name="Thibaud-Nissen F."/>
            <person name="Schobel S."/>
            <person name="Town C.D."/>
        </authorList>
    </citation>
    <scope>GENOME REANNOTATION</scope>
    <source>
        <strain>cv. Columbia</strain>
    </source>
</reference>
<reference key="5">
    <citation type="submission" date="2006-07" db="EMBL/GenBank/DDBJ databases">
        <title>Large-scale analysis of RIKEN Arabidopsis full-length (RAFL) cDNAs.</title>
        <authorList>
            <person name="Totoki Y."/>
            <person name="Seki M."/>
            <person name="Ishida J."/>
            <person name="Nakajima M."/>
            <person name="Enju A."/>
            <person name="Kamiya A."/>
            <person name="Narusaka M."/>
            <person name="Shin-i T."/>
            <person name="Nakagawa M."/>
            <person name="Sakamoto N."/>
            <person name="Oishi K."/>
            <person name="Kohara Y."/>
            <person name="Kobayashi M."/>
            <person name="Toyoda A."/>
            <person name="Sakaki Y."/>
            <person name="Sakurai T."/>
            <person name="Iida K."/>
            <person name="Akiyama K."/>
            <person name="Satou M."/>
            <person name="Toyoda T."/>
            <person name="Konagaya A."/>
            <person name="Carninci P."/>
            <person name="Kawai J."/>
            <person name="Hayashizaki Y."/>
            <person name="Shinozaki K."/>
        </authorList>
    </citation>
    <scope>NUCLEOTIDE SEQUENCE [LARGE SCALE MRNA]</scope>
    <source>
        <strain>cv. Columbia</strain>
    </source>
</reference>
<reference key="6">
    <citation type="submission" date="2008-09" db="EMBL/GenBank/DDBJ databases">
        <authorList>
            <person name="De Los Reyes C."/>
            <person name="Quan R."/>
            <person name="Chen H."/>
            <person name="Bautista V.R."/>
            <person name="Kim C.J."/>
            <person name="Ecker J.R."/>
        </authorList>
    </citation>
    <scope>NUCLEOTIDE SEQUENCE [LARGE SCALE MRNA]</scope>
    <source>
        <strain>cv. Columbia</strain>
    </source>
</reference>
<reference key="7">
    <citation type="journal article" date="2002" name="Plant Physiol.">
        <title>The LATERAL ORGAN BOUNDARIES gene defines a novel, plant-specific gene family.</title>
        <authorList>
            <person name="Shuai B."/>
            <person name="Reynaga-Pena C.G."/>
            <person name="Springer P.S."/>
        </authorList>
    </citation>
    <scope>GENE FAMILY</scope>
    <scope>NOMENCLATURE</scope>
</reference>
<reference key="8">
    <citation type="journal article" date="2003" name="Plant J.">
        <title>Activation tagging, a novel tool to dissect the functions of a gene family.</title>
        <authorList>
            <person name="Nakazawa M."/>
            <person name="Ichikawa T."/>
            <person name="Ishikawa A."/>
            <person name="Kobayashi H."/>
            <person name="Tsuhara Y."/>
            <person name="Kawashima M."/>
            <person name="Suzuki K."/>
            <person name="Muto S."/>
            <person name="Matsui M."/>
        </authorList>
    </citation>
    <scope>FUNCTION</scope>
</reference>
<reference key="9">
    <citation type="journal article" date="2005" name="Plant Mol. Biol.">
        <title>ASYMMETRIC LEAVES2-LIKE1 gene, a member of the AS2/LOB family, controls proximal-distal patterning in Arabidopsis petals.</title>
        <authorList>
            <person name="Chalfun-Junior A."/>
            <person name="Franken J."/>
            <person name="Mes J.J."/>
            <person name="Marsch-Martinez N."/>
            <person name="Pereira A."/>
            <person name="Angenent G.C."/>
        </authorList>
    </citation>
    <scope>FUNCTION</scope>
    <scope>TISSUE SPECIFICITY</scope>
</reference>
<feature type="chain" id="PRO_0000132251" description="LOB domain-containing protein 36">
    <location>
        <begin position="1"/>
        <end position="313"/>
    </location>
</feature>
<feature type="domain" description="LOB" evidence="1">
    <location>
        <begin position="6"/>
        <end position="107"/>
    </location>
</feature>
<feature type="region of interest" description="Disordered" evidence="2">
    <location>
        <begin position="245"/>
        <end position="313"/>
    </location>
</feature>
<feature type="compositionally biased region" description="Polar residues" evidence="2">
    <location>
        <begin position="249"/>
        <end position="260"/>
    </location>
</feature>
<feature type="compositionally biased region" description="Low complexity" evidence="2">
    <location>
        <begin position="280"/>
        <end position="302"/>
    </location>
</feature>
<feature type="sequence conflict" description="In Ref. 5; BAF00455." evidence="6" ref="5">
    <original>N</original>
    <variation>S</variation>
    <location>
        <position position="183"/>
    </location>
</feature>
<accession>Q9FKZ3</accession>
<accession>B5RID4</accession>
<accession>Q0WQZ4</accession>
<protein>
    <recommendedName>
        <fullName>LOB domain-containing protein 36</fullName>
    </recommendedName>
    <alternativeName>
        <fullName>ASYMMETRIC LEAVES 2-like protein 1</fullName>
        <shortName>AS2-like protein 1</shortName>
    </alternativeName>
</protein>
<evidence type="ECO:0000255" key="1">
    <source>
        <dbReference type="PROSITE-ProRule" id="PRU00291"/>
    </source>
</evidence>
<evidence type="ECO:0000256" key="2">
    <source>
        <dbReference type="SAM" id="MobiDB-lite"/>
    </source>
</evidence>
<evidence type="ECO:0000269" key="3">
    <source>
    </source>
</evidence>
<evidence type="ECO:0000269" key="4">
    <source>
    </source>
</evidence>
<evidence type="ECO:0000269" key="5">
    <source>
    </source>
</evidence>
<evidence type="ECO:0000305" key="6"/>
<organism>
    <name type="scientific">Arabidopsis thaliana</name>
    <name type="common">Mouse-ear cress</name>
    <dbReference type="NCBI Taxonomy" id="3702"/>
    <lineage>
        <taxon>Eukaryota</taxon>
        <taxon>Viridiplantae</taxon>
        <taxon>Streptophyta</taxon>
        <taxon>Embryophyta</taxon>
        <taxon>Tracheophyta</taxon>
        <taxon>Spermatophyta</taxon>
        <taxon>Magnoliopsida</taxon>
        <taxon>eudicotyledons</taxon>
        <taxon>Gunneridae</taxon>
        <taxon>Pentapetalae</taxon>
        <taxon>rosids</taxon>
        <taxon>malvids</taxon>
        <taxon>Brassicales</taxon>
        <taxon>Brassicaceae</taxon>
        <taxon>Camelineae</taxon>
        <taxon>Arabidopsis</taxon>
    </lineage>
</organism>